<feature type="chain" id="PRO_1000142708" description="Large ribosomal subunit protein uL18">
    <location>
        <begin position="1"/>
        <end position="120"/>
    </location>
</feature>
<organism>
    <name type="scientific">Rhizobium leguminosarum bv. trifolii (strain WSM2304)</name>
    <dbReference type="NCBI Taxonomy" id="395492"/>
    <lineage>
        <taxon>Bacteria</taxon>
        <taxon>Pseudomonadati</taxon>
        <taxon>Pseudomonadota</taxon>
        <taxon>Alphaproteobacteria</taxon>
        <taxon>Hyphomicrobiales</taxon>
        <taxon>Rhizobiaceae</taxon>
        <taxon>Rhizobium/Agrobacterium group</taxon>
        <taxon>Rhizobium</taxon>
    </lineage>
</organism>
<evidence type="ECO:0000255" key="1">
    <source>
        <dbReference type="HAMAP-Rule" id="MF_01337"/>
    </source>
</evidence>
<evidence type="ECO:0000305" key="2"/>
<name>RL18_RHILW</name>
<accession>B5ZYV1</accession>
<reference key="1">
    <citation type="journal article" date="2010" name="Stand. Genomic Sci.">
        <title>Complete genome sequence of Rhizobium leguminosarum bv trifolii strain WSM2304, an effective microsymbiont of the South American clover Trifolium polymorphum.</title>
        <authorList>
            <person name="Reeve W."/>
            <person name="O'Hara G."/>
            <person name="Chain P."/>
            <person name="Ardley J."/>
            <person name="Brau L."/>
            <person name="Nandesena K."/>
            <person name="Tiwari R."/>
            <person name="Malfatti S."/>
            <person name="Kiss H."/>
            <person name="Lapidus A."/>
            <person name="Copeland A."/>
            <person name="Nolan M."/>
            <person name="Land M."/>
            <person name="Ivanova N."/>
            <person name="Mavromatis K."/>
            <person name="Markowitz V."/>
            <person name="Kyrpides N."/>
            <person name="Melino V."/>
            <person name="Denton M."/>
            <person name="Yates R."/>
            <person name="Howieson J."/>
        </authorList>
    </citation>
    <scope>NUCLEOTIDE SEQUENCE [LARGE SCALE GENOMIC DNA]</scope>
    <source>
        <strain>WSM2304</strain>
    </source>
</reference>
<comment type="function">
    <text evidence="1">This is one of the proteins that bind and probably mediate the attachment of the 5S RNA into the large ribosomal subunit, where it forms part of the central protuberance.</text>
</comment>
<comment type="subunit">
    <text evidence="1">Part of the 50S ribosomal subunit; part of the 5S rRNA/L5/L18/L25 subcomplex. Contacts the 5S and 23S rRNAs.</text>
</comment>
<comment type="similarity">
    <text evidence="1">Belongs to the universal ribosomal protein uL18 family.</text>
</comment>
<protein>
    <recommendedName>
        <fullName evidence="1">Large ribosomal subunit protein uL18</fullName>
    </recommendedName>
    <alternativeName>
        <fullName evidence="2">50S ribosomal protein L18</fullName>
    </alternativeName>
</protein>
<proteinExistence type="inferred from homology"/>
<dbReference type="EMBL" id="CP001191">
    <property type="protein sequence ID" value="ACI54642.1"/>
    <property type="molecule type" value="Genomic_DNA"/>
</dbReference>
<dbReference type="RefSeq" id="WP_003578671.1">
    <property type="nucleotide sequence ID" value="NC_011369.1"/>
</dbReference>
<dbReference type="SMR" id="B5ZYV1"/>
<dbReference type="STRING" id="395492.Rleg2_1348"/>
<dbReference type="KEGG" id="rlt:Rleg2_1348"/>
<dbReference type="eggNOG" id="COG0256">
    <property type="taxonomic scope" value="Bacteria"/>
</dbReference>
<dbReference type="HOGENOM" id="CLU_098841_0_1_5"/>
<dbReference type="Proteomes" id="UP000008330">
    <property type="component" value="Chromosome"/>
</dbReference>
<dbReference type="GO" id="GO:0022625">
    <property type="term" value="C:cytosolic large ribosomal subunit"/>
    <property type="evidence" value="ECO:0007669"/>
    <property type="project" value="TreeGrafter"/>
</dbReference>
<dbReference type="GO" id="GO:0008097">
    <property type="term" value="F:5S rRNA binding"/>
    <property type="evidence" value="ECO:0007669"/>
    <property type="project" value="TreeGrafter"/>
</dbReference>
<dbReference type="GO" id="GO:0003735">
    <property type="term" value="F:structural constituent of ribosome"/>
    <property type="evidence" value="ECO:0007669"/>
    <property type="project" value="InterPro"/>
</dbReference>
<dbReference type="GO" id="GO:0006412">
    <property type="term" value="P:translation"/>
    <property type="evidence" value="ECO:0007669"/>
    <property type="project" value="UniProtKB-UniRule"/>
</dbReference>
<dbReference type="CDD" id="cd00432">
    <property type="entry name" value="Ribosomal_L18_L5e"/>
    <property type="match status" value="1"/>
</dbReference>
<dbReference type="FunFam" id="3.30.420.100:FF:000001">
    <property type="entry name" value="50S ribosomal protein L18"/>
    <property type="match status" value="1"/>
</dbReference>
<dbReference type="Gene3D" id="3.30.420.100">
    <property type="match status" value="1"/>
</dbReference>
<dbReference type="HAMAP" id="MF_01337_B">
    <property type="entry name" value="Ribosomal_uL18_B"/>
    <property type="match status" value="1"/>
</dbReference>
<dbReference type="InterPro" id="IPR004389">
    <property type="entry name" value="Ribosomal_uL18_bac-type"/>
</dbReference>
<dbReference type="InterPro" id="IPR005484">
    <property type="entry name" value="Ribosomal_uL18_bac/euk"/>
</dbReference>
<dbReference type="NCBIfam" id="TIGR00060">
    <property type="entry name" value="L18_bact"/>
    <property type="match status" value="1"/>
</dbReference>
<dbReference type="PANTHER" id="PTHR12899">
    <property type="entry name" value="39S RIBOSOMAL PROTEIN L18, MITOCHONDRIAL"/>
    <property type="match status" value="1"/>
</dbReference>
<dbReference type="PANTHER" id="PTHR12899:SF3">
    <property type="entry name" value="LARGE RIBOSOMAL SUBUNIT PROTEIN UL18M"/>
    <property type="match status" value="1"/>
</dbReference>
<dbReference type="Pfam" id="PF00861">
    <property type="entry name" value="Ribosomal_L18p"/>
    <property type="match status" value="1"/>
</dbReference>
<dbReference type="SUPFAM" id="SSF53137">
    <property type="entry name" value="Translational machinery components"/>
    <property type="match status" value="1"/>
</dbReference>
<keyword id="KW-1185">Reference proteome</keyword>
<keyword id="KW-0687">Ribonucleoprotein</keyword>
<keyword id="KW-0689">Ribosomal protein</keyword>
<keyword id="KW-0694">RNA-binding</keyword>
<keyword id="KW-0699">rRNA-binding</keyword>
<gene>
    <name evidence="1" type="primary">rplR</name>
    <name type="ordered locus">Rleg2_1348</name>
</gene>
<sequence length="120" mass="12742">MASRKEALARRANRVRRHLKSVANGRPRLSVHRSSKNIYAQVIDDVAGKTLAAASTLDKDLRGSLKTGADTAAAALVGKLVAERASKAGVTDVVFDRGAFIYHGRIKALADAAREGGLTF</sequence>